<accession>P60046</accession>
<dbReference type="EMBL" id="AE014073">
    <property type="protein sequence ID" value="AAP16013.1"/>
    <property type="molecule type" value="Genomic_DNA"/>
</dbReference>
<dbReference type="EMBL" id="AE014073">
    <property type="protein sequence ID" value="AAP16869.1"/>
    <property type="molecule type" value="Genomic_DNA"/>
</dbReference>
<dbReference type="RefSeq" id="WP_000042691.1">
    <property type="nucleotide sequence ID" value="NZ_UDSQ01000095.1"/>
</dbReference>
<dbReference type="SMR" id="P60046"/>
<dbReference type="STRING" id="198214.SF3591"/>
<dbReference type="PaxDb" id="198214-CP0044"/>
<dbReference type="KEGG" id="sfx:S0497"/>
<dbReference type="KEGG" id="sfx:S1483"/>
<dbReference type="PATRIC" id="fig|623.156.peg.119"/>
<dbReference type="HOGENOM" id="CLU_027402_17_0_6"/>
<dbReference type="Proteomes" id="UP000002673">
    <property type="component" value="Chromosome"/>
</dbReference>
<dbReference type="GO" id="GO:0043565">
    <property type="term" value="F:sequence-specific DNA binding"/>
    <property type="evidence" value="ECO:0007669"/>
    <property type="project" value="InterPro"/>
</dbReference>
<dbReference type="Gene3D" id="1.10.10.10">
    <property type="entry name" value="Winged helix-like DNA-binding domain superfamily/Winged helix DNA-binding domain"/>
    <property type="match status" value="2"/>
</dbReference>
<dbReference type="InterPro" id="IPR055247">
    <property type="entry name" value="InsJ-like_HTH"/>
</dbReference>
<dbReference type="InterPro" id="IPR052057">
    <property type="entry name" value="IS150/IS1296_orfA-like"/>
</dbReference>
<dbReference type="InterPro" id="IPR010921">
    <property type="entry name" value="Trp_repressor/repl_initiator"/>
</dbReference>
<dbReference type="InterPro" id="IPR036388">
    <property type="entry name" value="WH-like_DNA-bd_sf"/>
</dbReference>
<dbReference type="PANTHER" id="PTHR33795">
    <property type="entry name" value="INSERTION ELEMENT IS150 PROTEIN INSJ"/>
    <property type="match status" value="1"/>
</dbReference>
<dbReference type="PANTHER" id="PTHR33795:SF1">
    <property type="entry name" value="INSERTION ELEMENT IS150 PROTEIN INSJ"/>
    <property type="match status" value="1"/>
</dbReference>
<dbReference type="Pfam" id="PF13518">
    <property type="entry name" value="HTH_28"/>
    <property type="match status" value="2"/>
</dbReference>
<dbReference type="SUPFAM" id="SSF48295">
    <property type="entry name" value="TrpR-like"/>
    <property type="match status" value="2"/>
</dbReference>
<reference key="1">
    <citation type="journal article" date="2003" name="Infect. Immun.">
        <title>Complete genome sequence and comparative genomics of Shigella flexneri serotype 2a strain 2457T.</title>
        <authorList>
            <person name="Wei J."/>
            <person name="Goldberg M.B."/>
            <person name="Burland V."/>
            <person name="Venkatesan M.M."/>
            <person name="Deng W."/>
            <person name="Fournier G."/>
            <person name="Mayhew G.F."/>
            <person name="Plunkett G. III"/>
            <person name="Rose D.J."/>
            <person name="Darling A."/>
            <person name="Mau B."/>
            <person name="Perna N.T."/>
            <person name="Payne S.M."/>
            <person name="Runyen-Janecky L.J."/>
            <person name="Zhou S."/>
            <person name="Schwartz D.C."/>
            <person name="Blattner F.R."/>
        </authorList>
    </citation>
    <scope>NUCLEOTIDE SEQUENCE [LARGE SCALE GENOMIC DNA]</scope>
    <source>
        <strain>ATCC 700930 / 2457T / Serotype 2a</strain>
    </source>
</reference>
<proteinExistence type="inferred from homology"/>
<comment type="similarity">
    <text evidence="1">Belongs to the IS150/IS1296 orfA family.</text>
</comment>
<sequence>MSKPKYPFEKRLEVVNHYFTTDDGYRIISARFGVPRTQVRTWVALYEKHGEKGLIPKPKGVSADPELRIKVVKAVIEQHMSLNQAAAHFMLAGSGSVARWLKVYEERGEAGLRALKIGTKRNIAISVDPEKAASALELSKDRRIEDLERQVRFLETRLMYLKKLKALAHPTKK</sequence>
<name>INSJ_SHIFL</name>
<feature type="chain" id="PRO_0000075418" description="Insertion element IS150 uncharacterized 19.7 kDa protein">
    <location>
        <begin position="1"/>
        <end position="173"/>
    </location>
</feature>
<keyword id="KW-0814">Transposable element</keyword>
<protein>
    <recommendedName>
        <fullName>Insertion element IS150 uncharacterized 19.7 kDa protein</fullName>
    </recommendedName>
</protein>
<evidence type="ECO:0000305" key="1"/>
<gene>
    <name type="primary">IS1501</name>
    <name type="synonym">IS1031</name>
    <name type="ordered locus">S0497</name>
</gene>
<gene>
    <name type="primary">IS1502</name>
    <name type="synonym">IS1032</name>
    <name type="ordered locus">S1483</name>
</gene>
<organism>
    <name type="scientific">Shigella flexneri</name>
    <dbReference type="NCBI Taxonomy" id="623"/>
    <lineage>
        <taxon>Bacteria</taxon>
        <taxon>Pseudomonadati</taxon>
        <taxon>Pseudomonadota</taxon>
        <taxon>Gammaproteobacteria</taxon>
        <taxon>Enterobacterales</taxon>
        <taxon>Enterobacteriaceae</taxon>
        <taxon>Shigella</taxon>
    </lineage>
</organism>